<reference key="1">
    <citation type="journal article" date="2002" name="Proc. Natl. Acad. Sci. U.S.A.">
        <title>The genome sequence of the facultative intracellular pathogen Brucella melitensis.</title>
        <authorList>
            <person name="DelVecchio V.G."/>
            <person name="Kapatral V."/>
            <person name="Redkar R.J."/>
            <person name="Patra G."/>
            <person name="Mujer C."/>
            <person name="Los T."/>
            <person name="Ivanova N."/>
            <person name="Anderson I."/>
            <person name="Bhattacharyya A."/>
            <person name="Lykidis A."/>
            <person name="Reznik G."/>
            <person name="Jablonski L."/>
            <person name="Larsen N."/>
            <person name="D'Souza M."/>
            <person name="Bernal A."/>
            <person name="Mazur M."/>
            <person name="Goltsman E."/>
            <person name="Selkov E."/>
            <person name="Elzer P.H."/>
            <person name="Hagius S."/>
            <person name="O'Callaghan D."/>
            <person name="Letesson J.-J."/>
            <person name="Haselkorn R."/>
            <person name="Kyrpides N.C."/>
            <person name="Overbeek R."/>
        </authorList>
    </citation>
    <scope>NUCLEOTIDE SEQUENCE [LARGE SCALE GENOMIC DNA]</scope>
    <source>
        <strain>ATCC 23456 / CCUG 17765 / NCTC 10094 / 16M</strain>
    </source>
</reference>
<organism>
    <name type="scientific">Brucella melitensis biotype 1 (strain ATCC 23456 / CCUG 17765 / NCTC 10094 / 16M)</name>
    <dbReference type="NCBI Taxonomy" id="224914"/>
    <lineage>
        <taxon>Bacteria</taxon>
        <taxon>Pseudomonadati</taxon>
        <taxon>Pseudomonadota</taxon>
        <taxon>Alphaproteobacteria</taxon>
        <taxon>Hyphomicrobiales</taxon>
        <taxon>Brucellaceae</taxon>
        <taxon>Brucella/Ochrobactrum group</taxon>
        <taxon>Brucella</taxon>
    </lineage>
</organism>
<feature type="chain" id="PRO_0000102632" description="Ribosome-binding factor A">
    <location>
        <begin position="1"/>
        <end position="150"/>
    </location>
</feature>
<feature type="region of interest" description="Disordered" evidence="2">
    <location>
        <begin position="131"/>
        <end position="150"/>
    </location>
</feature>
<proteinExistence type="inferred from homology"/>
<accession>Q8YEB4</accession>
<keyword id="KW-0963">Cytoplasm</keyword>
<keyword id="KW-0690">Ribosome biogenesis</keyword>
<evidence type="ECO:0000255" key="1">
    <source>
        <dbReference type="HAMAP-Rule" id="MF_00003"/>
    </source>
</evidence>
<evidence type="ECO:0000256" key="2">
    <source>
        <dbReference type="SAM" id="MobiDB-lite"/>
    </source>
</evidence>
<evidence type="ECO:0000305" key="3"/>
<comment type="function">
    <text evidence="1">One of several proteins that assist in the late maturation steps of the functional core of the 30S ribosomal subunit. Associates with free 30S ribosomal subunits (but not with 30S subunits that are part of 70S ribosomes or polysomes). Required for efficient processing of 16S rRNA. May interact with the 5'-terminal helix region of 16S rRNA.</text>
</comment>
<comment type="subunit">
    <text evidence="1">Monomer. Binds 30S ribosomal subunits, but not 50S ribosomal subunits or 70S ribosomes.</text>
</comment>
<comment type="subcellular location">
    <subcellularLocation>
        <location evidence="1">Cytoplasm</location>
    </subcellularLocation>
</comment>
<comment type="similarity">
    <text evidence="1">Belongs to the RbfA family.</text>
</comment>
<comment type="sequence caution" evidence="3">
    <conflict type="erroneous initiation">
        <sequence resource="EMBL-CDS" id="AAL53145"/>
    </conflict>
    <text>Extended N-terminus.</text>
</comment>
<name>RBFA_BRUME</name>
<gene>
    <name evidence="1" type="primary">rbfA</name>
    <name type="ordered locus">BMEI1964</name>
</gene>
<sequence>MARSHDTKGSGGLSQRQLRVGEQVRHALAQVLQRGEIRDDLIERTVISVSEVRMSPDLKIATCFITPLGSADPQAVIKALASHAKFIRGRVAPSLAQMKYMPEFRFRPDTSFDNFSKIDALLRFPEVARDLSHDDDEDGGADEAPRNGDE</sequence>
<dbReference type="EMBL" id="AE008917">
    <property type="protein sequence ID" value="AAL53145.1"/>
    <property type="status" value="ALT_INIT"/>
    <property type="molecule type" value="Genomic_DNA"/>
</dbReference>
<dbReference type="PIR" id="AF3497">
    <property type="entry name" value="AF3497"/>
</dbReference>
<dbReference type="RefSeq" id="WP_004684583.1">
    <property type="nucleotide sequence ID" value="NZ_GG703778.1"/>
</dbReference>
<dbReference type="SMR" id="Q8YEB4"/>
<dbReference type="GeneID" id="29594850"/>
<dbReference type="KEGG" id="bme:BMEI1964"/>
<dbReference type="KEGG" id="bmel:DK63_1526"/>
<dbReference type="PATRIC" id="fig|224914.52.peg.1612"/>
<dbReference type="eggNOG" id="COG0858">
    <property type="taxonomic scope" value="Bacteria"/>
</dbReference>
<dbReference type="Proteomes" id="UP000000419">
    <property type="component" value="Chromosome I"/>
</dbReference>
<dbReference type="GO" id="GO:0005829">
    <property type="term" value="C:cytosol"/>
    <property type="evidence" value="ECO:0007669"/>
    <property type="project" value="TreeGrafter"/>
</dbReference>
<dbReference type="GO" id="GO:0043024">
    <property type="term" value="F:ribosomal small subunit binding"/>
    <property type="evidence" value="ECO:0007669"/>
    <property type="project" value="TreeGrafter"/>
</dbReference>
<dbReference type="GO" id="GO:0030490">
    <property type="term" value="P:maturation of SSU-rRNA"/>
    <property type="evidence" value="ECO:0007669"/>
    <property type="project" value="UniProtKB-UniRule"/>
</dbReference>
<dbReference type="Gene3D" id="3.30.300.20">
    <property type="match status" value="1"/>
</dbReference>
<dbReference type="HAMAP" id="MF_00003">
    <property type="entry name" value="RbfA"/>
    <property type="match status" value="1"/>
</dbReference>
<dbReference type="InterPro" id="IPR015946">
    <property type="entry name" value="KH_dom-like_a/b"/>
</dbReference>
<dbReference type="InterPro" id="IPR000238">
    <property type="entry name" value="RbfA"/>
</dbReference>
<dbReference type="InterPro" id="IPR023799">
    <property type="entry name" value="RbfA_dom_sf"/>
</dbReference>
<dbReference type="InterPro" id="IPR020053">
    <property type="entry name" value="Ribosome-bd_factorA_CS"/>
</dbReference>
<dbReference type="NCBIfam" id="NF001802">
    <property type="entry name" value="PRK00521.2-5"/>
    <property type="match status" value="1"/>
</dbReference>
<dbReference type="NCBIfam" id="TIGR00082">
    <property type="entry name" value="rbfA"/>
    <property type="match status" value="1"/>
</dbReference>
<dbReference type="PANTHER" id="PTHR33515">
    <property type="entry name" value="RIBOSOME-BINDING FACTOR A, CHLOROPLASTIC-RELATED"/>
    <property type="match status" value="1"/>
</dbReference>
<dbReference type="PANTHER" id="PTHR33515:SF1">
    <property type="entry name" value="RIBOSOME-BINDING FACTOR A, CHLOROPLASTIC-RELATED"/>
    <property type="match status" value="1"/>
</dbReference>
<dbReference type="Pfam" id="PF02033">
    <property type="entry name" value="RBFA"/>
    <property type="match status" value="1"/>
</dbReference>
<dbReference type="SUPFAM" id="SSF89919">
    <property type="entry name" value="Ribosome-binding factor A, RbfA"/>
    <property type="match status" value="1"/>
</dbReference>
<dbReference type="PROSITE" id="PS01319">
    <property type="entry name" value="RBFA"/>
    <property type="match status" value="1"/>
</dbReference>
<protein>
    <recommendedName>
        <fullName evidence="1">Ribosome-binding factor A</fullName>
    </recommendedName>
</protein>